<dbReference type="EC" id="1.5.1.5" evidence="1"/>
<dbReference type="EC" id="3.5.4.9" evidence="1"/>
<dbReference type="EMBL" id="AP009493">
    <property type="protein sequence ID" value="BAG19543.1"/>
    <property type="molecule type" value="Genomic_DNA"/>
</dbReference>
<dbReference type="RefSeq" id="WP_012379399.1">
    <property type="nucleotide sequence ID" value="NC_010572.1"/>
</dbReference>
<dbReference type="SMR" id="B1W3N7"/>
<dbReference type="KEGG" id="sgr:SGR_2714"/>
<dbReference type="PATRIC" id="fig|455632.4.peg.2767"/>
<dbReference type="eggNOG" id="COG0190">
    <property type="taxonomic scope" value="Bacteria"/>
</dbReference>
<dbReference type="HOGENOM" id="CLU_034045_3_0_11"/>
<dbReference type="UniPathway" id="UPA00193"/>
<dbReference type="Proteomes" id="UP000001685">
    <property type="component" value="Chromosome"/>
</dbReference>
<dbReference type="GO" id="GO:0005829">
    <property type="term" value="C:cytosol"/>
    <property type="evidence" value="ECO:0007669"/>
    <property type="project" value="TreeGrafter"/>
</dbReference>
<dbReference type="GO" id="GO:0004477">
    <property type="term" value="F:methenyltetrahydrofolate cyclohydrolase activity"/>
    <property type="evidence" value="ECO:0007669"/>
    <property type="project" value="UniProtKB-UniRule"/>
</dbReference>
<dbReference type="GO" id="GO:0004488">
    <property type="term" value="F:methylenetetrahydrofolate dehydrogenase (NADP+) activity"/>
    <property type="evidence" value="ECO:0007669"/>
    <property type="project" value="UniProtKB-UniRule"/>
</dbReference>
<dbReference type="GO" id="GO:0000105">
    <property type="term" value="P:L-histidine biosynthetic process"/>
    <property type="evidence" value="ECO:0007669"/>
    <property type="project" value="UniProtKB-KW"/>
</dbReference>
<dbReference type="GO" id="GO:0009086">
    <property type="term" value="P:methionine biosynthetic process"/>
    <property type="evidence" value="ECO:0007669"/>
    <property type="project" value="UniProtKB-KW"/>
</dbReference>
<dbReference type="GO" id="GO:0006164">
    <property type="term" value="P:purine nucleotide biosynthetic process"/>
    <property type="evidence" value="ECO:0007669"/>
    <property type="project" value="UniProtKB-KW"/>
</dbReference>
<dbReference type="GO" id="GO:0035999">
    <property type="term" value="P:tetrahydrofolate interconversion"/>
    <property type="evidence" value="ECO:0007669"/>
    <property type="project" value="UniProtKB-UniRule"/>
</dbReference>
<dbReference type="CDD" id="cd01080">
    <property type="entry name" value="NAD_bind_m-THF_DH_Cyclohyd"/>
    <property type="match status" value="1"/>
</dbReference>
<dbReference type="FunFam" id="3.40.50.720:FF:000094">
    <property type="entry name" value="Bifunctional protein FolD"/>
    <property type="match status" value="1"/>
</dbReference>
<dbReference type="FunFam" id="3.40.50.10860:FF:000005">
    <property type="entry name" value="C-1-tetrahydrofolate synthase, cytoplasmic, putative"/>
    <property type="match status" value="1"/>
</dbReference>
<dbReference type="Gene3D" id="3.40.50.10860">
    <property type="entry name" value="Leucine Dehydrogenase, chain A, domain 1"/>
    <property type="match status" value="1"/>
</dbReference>
<dbReference type="Gene3D" id="3.40.50.720">
    <property type="entry name" value="NAD(P)-binding Rossmann-like Domain"/>
    <property type="match status" value="1"/>
</dbReference>
<dbReference type="HAMAP" id="MF_01576">
    <property type="entry name" value="THF_DHG_CYH"/>
    <property type="match status" value="1"/>
</dbReference>
<dbReference type="InterPro" id="IPR046346">
    <property type="entry name" value="Aminoacid_DH-like_N_sf"/>
</dbReference>
<dbReference type="InterPro" id="IPR036291">
    <property type="entry name" value="NAD(P)-bd_dom_sf"/>
</dbReference>
<dbReference type="InterPro" id="IPR000672">
    <property type="entry name" value="THF_DH/CycHdrlase"/>
</dbReference>
<dbReference type="InterPro" id="IPR020630">
    <property type="entry name" value="THF_DH/CycHdrlase_cat_dom"/>
</dbReference>
<dbReference type="InterPro" id="IPR020631">
    <property type="entry name" value="THF_DH/CycHdrlase_NAD-bd_dom"/>
</dbReference>
<dbReference type="NCBIfam" id="NF010789">
    <property type="entry name" value="PRK14193.1"/>
    <property type="match status" value="1"/>
</dbReference>
<dbReference type="PANTHER" id="PTHR48099:SF5">
    <property type="entry name" value="C-1-TETRAHYDROFOLATE SYNTHASE, CYTOPLASMIC"/>
    <property type="match status" value="1"/>
</dbReference>
<dbReference type="PANTHER" id="PTHR48099">
    <property type="entry name" value="C-1-TETRAHYDROFOLATE SYNTHASE, CYTOPLASMIC-RELATED"/>
    <property type="match status" value="1"/>
</dbReference>
<dbReference type="Pfam" id="PF00763">
    <property type="entry name" value="THF_DHG_CYH"/>
    <property type="match status" value="1"/>
</dbReference>
<dbReference type="Pfam" id="PF02882">
    <property type="entry name" value="THF_DHG_CYH_C"/>
    <property type="match status" value="1"/>
</dbReference>
<dbReference type="PRINTS" id="PR00085">
    <property type="entry name" value="THFDHDRGNASE"/>
</dbReference>
<dbReference type="SUPFAM" id="SSF53223">
    <property type="entry name" value="Aminoacid dehydrogenase-like, N-terminal domain"/>
    <property type="match status" value="1"/>
</dbReference>
<dbReference type="SUPFAM" id="SSF51735">
    <property type="entry name" value="NAD(P)-binding Rossmann-fold domains"/>
    <property type="match status" value="1"/>
</dbReference>
<protein>
    <recommendedName>
        <fullName evidence="1">Bifunctional protein FolD</fullName>
    </recommendedName>
    <domain>
        <recommendedName>
            <fullName evidence="1">Methylenetetrahydrofolate dehydrogenase</fullName>
            <ecNumber evidence="1">1.5.1.5</ecNumber>
        </recommendedName>
    </domain>
    <domain>
        <recommendedName>
            <fullName evidence="1">Methenyltetrahydrofolate cyclohydrolase</fullName>
            <ecNumber evidence="1">3.5.4.9</ecNumber>
        </recommendedName>
    </domain>
</protein>
<evidence type="ECO:0000255" key="1">
    <source>
        <dbReference type="HAMAP-Rule" id="MF_01576"/>
    </source>
</evidence>
<organism>
    <name type="scientific">Streptomyces griseus subsp. griseus (strain JCM 4626 / CBS 651.72 / NBRC 13350 / KCC S-0626 / ISP 5235)</name>
    <dbReference type="NCBI Taxonomy" id="455632"/>
    <lineage>
        <taxon>Bacteria</taxon>
        <taxon>Bacillati</taxon>
        <taxon>Actinomycetota</taxon>
        <taxon>Actinomycetes</taxon>
        <taxon>Kitasatosporales</taxon>
        <taxon>Streptomycetaceae</taxon>
        <taxon>Streptomyces</taxon>
    </lineage>
</organism>
<sequence length="293" mass="30506">MTAQILDGKATAAAIKSDLTVRVAALKAQGITPGLGTLLVGDDPGSRWYVNGKHRDCAQVGIGSIQRELPDTATQEEIEEVVRELNANPECTGYIVQLPLPKGIDTNRVLELMDPEKDADGLHPMSLGRLVLNETGPLPCTPQGVVQLLRAHGVEINGAHVVVVGRGVTIGRSIPLLLTRKSENATVTQCHTGTRDLSSHLRQADIIVAAAGVQHLIKPEDVKPGAAVLDVGVSRDADGKIVGDVHPGVREVAAWVAPNPGGVGPMTRAQLLVNVVEAAERAAAEAADAAAAG</sequence>
<reference key="1">
    <citation type="journal article" date="2008" name="J. Bacteriol.">
        <title>Genome sequence of the streptomycin-producing microorganism Streptomyces griseus IFO 13350.</title>
        <authorList>
            <person name="Ohnishi Y."/>
            <person name="Ishikawa J."/>
            <person name="Hara H."/>
            <person name="Suzuki H."/>
            <person name="Ikenoya M."/>
            <person name="Ikeda H."/>
            <person name="Yamashita A."/>
            <person name="Hattori M."/>
            <person name="Horinouchi S."/>
        </authorList>
    </citation>
    <scope>NUCLEOTIDE SEQUENCE [LARGE SCALE GENOMIC DNA]</scope>
    <source>
        <strain>JCM 4626 / CBS 651.72 / NBRC 13350 / KCC S-0626 / ISP 5235</strain>
    </source>
</reference>
<feature type="chain" id="PRO_1000196808" description="Bifunctional protein FolD">
    <location>
        <begin position="1"/>
        <end position="293"/>
    </location>
</feature>
<feature type="binding site" evidence="1">
    <location>
        <begin position="165"/>
        <end position="167"/>
    </location>
    <ligand>
        <name>NADP(+)</name>
        <dbReference type="ChEBI" id="CHEBI:58349"/>
    </ligand>
</feature>
<feature type="binding site" evidence="1">
    <location>
        <position position="192"/>
    </location>
    <ligand>
        <name>NADP(+)</name>
        <dbReference type="ChEBI" id="CHEBI:58349"/>
    </ligand>
</feature>
<feature type="binding site" evidence="1">
    <location>
        <position position="233"/>
    </location>
    <ligand>
        <name>NADP(+)</name>
        <dbReference type="ChEBI" id="CHEBI:58349"/>
    </ligand>
</feature>
<name>FOLD_STRGG</name>
<comment type="function">
    <text evidence="1">Catalyzes the oxidation of 5,10-methylenetetrahydrofolate to 5,10-methenyltetrahydrofolate and then the hydrolysis of 5,10-methenyltetrahydrofolate to 10-formyltetrahydrofolate.</text>
</comment>
<comment type="catalytic activity">
    <reaction evidence="1">
        <text>(6R)-5,10-methylene-5,6,7,8-tetrahydrofolate + NADP(+) = (6R)-5,10-methenyltetrahydrofolate + NADPH</text>
        <dbReference type="Rhea" id="RHEA:22812"/>
        <dbReference type="ChEBI" id="CHEBI:15636"/>
        <dbReference type="ChEBI" id="CHEBI:57455"/>
        <dbReference type="ChEBI" id="CHEBI:57783"/>
        <dbReference type="ChEBI" id="CHEBI:58349"/>
        <dbReference type="EC" id="1.5.1.5"/>
    </reaction>
</comment>
<comment type="catalytic activity">
    <reaction evidence="1">
        <text>(6R)-5,10-methenyltetrahydrofolate + H2O = (6R)-10-formyltetrahydrofolate + H(+)</text>
        <dbReference type="Rhea" id="RHEA:23700"/>
        <dbReference type="ChEBI" id="CHEBI:15377"/>
        <dbReference type="ChEBI" id="CHEBI:15378"/>
        <dbReference type="ChEBI" id="CHEBI:57455"/>
        <dbReference type="ChEBI" id="CHEBI:195366"/>
        <dbReference type="EC" id="3.5.4.9"/>
    </reaction>
</comment>
<comment type="pathway">
    <text evidence="1">One-carbon metabolism; tetrahydrofolate interconversion.</text>
</comment>
<comment type="subunit">
    <text evidence="1">Homodimer.</text>
</comment>
<comment type="similarity">
    <text evidence="1">Belongs to the tetrahydrofolate dehydrogenase/cyclohydrolase family.</text>
</comment>
<gene>
    <name evidence="1" type="primary">folD</name>
    <name type="ordered locus">SGR_2714</name>
</gene>
<accession>B1W3N7</accession>
<keyword id="KW-0028">Amino-acid biosynthesis</keyword>
<keyword id="KW-0368">Histidine biosynthesis</keyword>
<keyword id="KW-0378">Hydrolase</keyword>
<keyword id="KW-0486">Methionine biosynthesis</keyword>
<keyword id="KW-0511">Multifunctional enzyme</keyword>
<keyword id="KW-0521">NADP</keyword>
<keyword id="KW-0554">One-carbon metabolism</keyword>
<keyword id="KW-0560">Oxidoreductase</keyword>
<keyword id="KW-0658">Purine biosynthesis</keyword>
<proteinExistence type="inferred from homology"/>